<reference key="1">
    <citation type="submission" date="2008-04" db="EMBL/GenBank/DDBJ databases">
        <title>Complete sequence of Yersinia pseudotuberculosis PB1/+.</title>
        <authorList>
            <person name="Copeland A."/>
            <person name="Lucas S."/>
            <person name="Lapidus A."/>
            <person name="Glavina del Rio T."/>
            <person name="Dalin E."/>
            <person name="Tice H."/>
            <person name="Bruce D."/>
            <person name="Goodwin L."/>
            <person name="Pitluck S."/>
            <person name="Munk A.C."/>
            <person name="Brettin T."/>
            <person name="Detter J.C."/>
            <person name="Han C."/>
            <person name="Tapia R."/>
            <person name="Schmutz J."/>
            <person name="Larimer F."/>
            <person name="Land M."/>
            <person name="Hauser L."/>
            <person name="Challacombe J.F."/>
            <person name="Green L."/>
            <person name="Lindler L.E."/>
            <person name="Nikolich M.P."/>
            <person name="Richardson P."/>
        </authorList>
    </citation>
    <scope>NUCLEOTIDE SEQUENCE [LARGE SCALE GENOMIC DNA]</scope>
    <source>
        <strain>PB1/+</strain>
    </source>
</reference>
<name>PUR5_YERPB</name>
<sequence>MTNKTSLSYKDAGVDIDAGNDLVDRIKGVVKQTRRPEVMGGLGGFGALCALPQKYREPILVSGTDGVGTKLRLAMDLKRHDTIGIDLVAMCVNDLVVQGAEPLFFLDYFATGKLDVDTAASVITGIAEGCKQSGCALVGGETAEMPGMYHGDDYDVAGFCVGVVEKSEIIDGSKVTPGDVLVALGASGPHSNGYSLVRKILDVSNTNPEQTSLEGKSLADHLLEPTKIYVKSILSLIEQLDIHAIAHLTGGGFWENIPRVLPQGMQAVIDEASWQWPAVFSWLQHAGNVSRHEMYRTFNCGVGMVVALPAELADKAVELLTASGEKAWKIGVIAAATEGAEQVIINP</sequence>
<comment type="catalytic activity">
    <reaction evidence="1">
        <text>2-formamido-N(1)-(5-O-phospho-beta-D-ribosyl)acetamidine + ATP = 5-amino-1-(5-phospho-beta-D-ribosyl)imidazole + ADP + phosphate + H(+)</text>
        <dbReference type="Rhea" id="RHEA:23032"/>
        <dbReference type="ChEBI" id="CHEBI:15378"/>
        <dbReference type="ChEBI" id="CHEBI:30616"/>
        <dbReference type="ChEBI" id="CHEBI:43474"/>
        <dbReference type="ChEBI" id="CHEBI:137981"/>
        <dbReference type="ChEBI" id="CHEBI:147287"/>
        <dbReference type="ChEBI" id="CHEBI:456216"/>
        <dbReference type="EC" id="6.3.3.1"/>
    </reaction>
</comment>
<comment type="pathway">
    <text evidence="1">Purine metabolism; IMP biosynthesis via de novo pathway; 5-amino-1-(5-phospho-D-ribosyl)imidazole from N(2)-formyl-N(1)-(5-phospho-D-ribosyl)glycinamide: step 2/2.</text>
</comment>
<comment type="subcellular location">
    <subcellularLocation>
        <location evidence="1">Cytoplasm</location>
    </subcellularLocation>
</comment>
<comment type="similarity">
    <text evidence="1">Belongs to the AIR synthase family.</text>
</comment>
<protein>
    <recommendedName>
        <fullName evidence="1">Phosphoribosylformylglycinamidine cyclo-ligase</fullName>
        <ecNumber evidence="1">6.3.3.1</ecNumber>
    </recommendedName>
    <alternativeName>
        <fullName evidence="1">AIR synthase</fullName>
    </alternativeName>
    <alternativeName>
        <fullName evidence="1">AIRS</fullName>
    </alternativeName>
    <alternativeName>
        <fullName evidence="1">Phosphoribosyl-aminoimidazole synthetase</fullName>
    </alternativeName>
</protein>
<proteinExistence type="inferred from homology"/>
<organism>
    <name type="scientific">Yersinia pseudotuberculosis serotype IB (strain PB1/+)</name>
    <dbReference type="NCBI Taxonomy" id="502801"/>
    <lineage>
        <taxon>Bacteria</taxon>
        <taxon>Pseudomonadati</taxon>
        <taxon>Pseudomonadota</taxon>
        <taxon>Gammaproteobacteria</taxon>
        <taxon>Enterobacterales</taxon>
        <taxon>Yersiniaceae</taxon>
        <taxon>Yersinia</taxon>
    </lineage>
</organism>
<gene>
    <name evidence="1" type="primary">purM</name>
    <name type="ordered locus">YPTS_2900</name>
</gene>
<dbReference type="EC" id="6.3.3.1" evidence="1"/>
<dbReference type="EMBL" id="CP001048">
    <property type="protein sequence ID" value="ACC89857.1"/>
    <property type="molecule type" value="Genomic_DNA"/>
</dbReference>
<dbReference type="RefSeq" id="WP_011192770.1">
    <property type="nucleotide sequence ID" value="NZ_CP009780.1"/>
</dbReference>
<dbReference type="SMR" id="B2K9K0"/>
<dbReference type="KEGG" id="ypb:YPTS_2900"/>
<dbReference type="PATRIC" id="fig|502801.10.peg.2329"/>
<dbReference type="UniPathway" id="UPA00074">
    <property type="reaction ID" value="UER00129"/>
</dbReference>
<dbReference type="GO" id="GO:0005829">
    <property type="term" value="C:cytosol"/>
    <property type="evidence" value="ECO:0007669"/>
    <property type="project" value="TreeGrafter"/>
</dbReference>
<dbReference type="GO" id="GO:0005524">
    <property type="term" value="F:ATP binding"/>
    <property type="evidence" value="ECO:0007669"/>
    <property type="project" value="UniProtKB-KW"/>
</dbReference>
<dbReference type="GO" id="GO:0004637">
    <property type="term" value="F:phosphoribosylamine-glycine ligase activity"/>
    <property type="evidence" value="ECO:0007669"/>
    <property type="project" value="TreeGrafter"/>
</dbReference>
<dbReference type="GO" id="GO:0004641">
    <property type="term" value="F:phosphoribosylformylglycinamidine cyclo-ligase activity"/>
    <property type="evidence" value="ECO:0007669"/>
    <property type="project" value="UniProtKB-UniRule"/>
</dbReference>
<dbReference type="GO" id="GO:0006189">
    <property type="term" value="P:'de novo' IMP biosynthetic process"/>
    <property type="evidence" value="ECO:0007669"/>
    <property type="project" value="UniProtKB-UniRule"/>
</dbReference>
<dbReference type="GO" id="GO:0046084">
    <property type="term" value="P:adenine biosynthetic process"/>
    <property type="evidence" value="ECO:0007669"/>
    <property type="project" value="TreeGrafter"/>
</dbReference>
<dbReference type="CDD" id="cd02196">
    <property type="entry name" value="PurM"/>
    <property type="match status" value="1"/>
</dbReference>
<dbReference type="FunFam" id="3.30.1330.10:FF:000001">
    <property type="entry name" value="Phosphoribosylformylglycinamidine cyclo-ligase"/>
    <property type="match status" value="1"/>
</dbReference>
<dbReference type="FunFam" id="3.90.650.10:FF:000001">
    <property type="entry name" value="Phosphoribosylformylglycinamidine cyclo-ligase"/>
    <property type="match status" value="1"/>
</dbReference>
<dbReference type="Gene3D" id="3.90.650.10">
    <property type="entry name" value="PurM-like C-terminal domain"/>
    <property type="match status" value="1"/>
</dbReference>
<dbReference type="Gene3D" id="3.30.1330.10">
    <property type="entry name" value="PurM-like, N-terminal domain"/>
    <property type="match status" value="1"/>
</dbReference>
<dbReference type="HAMAP" id="MF_00741">
    <property type="entry name" value="AIRS"/>
    <property type="match status" value="1"/>
</dbReference>
<dbReference type="InterPro" id="IPR010918">
    <property type="entry name" value="PurM-like_C_dom"/>
</dbReference>
<dbReference type="InterPro" id="IPR036676">
    <property type="entry name" value="PurM-like_C_sf"/>
</dbReference>
<dbReference type="InterPro" id="IPR016188">
    <property type="entry name" value="PurM-like_N"/>
</dbReference>
<dbReference type="InterPro" id="IPR036921">
    <property type="entry name" value="PurM-like_N_sf"/>
</dbReference>
<dbReference type="InterPro" id="IPR004733">
    <property type="entry name" value="PurM_cligase"/>
</dbReference>
<dbReference type="NCBIfam" id="TIGR00878">
    <property type="entry name" value="purM"/>
    <property type="match status" value="1"/>
</dbReference>
<dbReference type="PANTHER" id="PTHR10520:SF12">
    <property type="entry name" value="TRIFUNCTIONAL PURINE BIOSYNTHETIC PROTEIN ADENOSINE-3"/>
    <property type="match status" value="1"/>
</dbReference>
<dbReference type="PANTHER" id="PTHR10520">
    <property type="entry name" value="TRIFUNCTIONAL PURINE BIOSYNTHETIC PROTEIN ADENOSINE-3-RELATED"/>
    <property type="match status" value="1"/>
</dbReference>
<dbReference type="Pfam" id="PF00586">
    <property type="entry name" value="AIRS"/>
    <property type="match status" value="1"/>
</dbReference>
<dbReference type="Pfam" id="PF02769">
    <property type="entry name" value="AIRS_C"/>
    <property type="match status" value="1"/>
</dbReference>
<dbReference type="SUPFAM" id="SSF56042">
    <property type="entry name" value="PurM C-terminal domain-like"/>
    <property type="match status" value="1"/>
</dbReference>
<dbReference type="SUPFAM" id="SSF55326">
    <property type="entry name" value="PurM N-terminal domain-like"/>
    <property type="match status" value="1"/>
</dbReference>
<feature type="chain" id="PRO_1000193059" description="Phosphoribosylformylglycinamidine cyclo-ligase">
    <location>
        <begin position="1"/>
        <end position="347"/>
    </location>
</feature>
<accession>B2K9K0</accession>
<keyword id="KW-0067">ATP-binding</keyword>
<keyword id="KW-0963">Cytoplasm</keyword>
<keyword id="KW-0436">Ligase</keyword>
<keyword id="KW-0547">Nucleotide-binding</keyword>
<keyword id="KW-0658">Purine biosynthesis</keyword>
<evidence type="ECO:0000255" key="1">
    <source>
        <dbReference type="HAMAP-Rule" id="MF_00741"/>
    </source>
</evidence>